<reference key="1">
    <citation type="submission" date="2008-01" db="EMBL/GenBank/DDBJ databases">
        <title>NISC comparative sequencing initiative.</title>
        <authorList>
            <person name="Antonellis A."/>
            <person name="Benjamin B."/>
            <person name="Blakesley R.W."/>
            <person name="Bouffard G.G."/>
            <person name="Brinkley C."/>
            <person name="Brooks S."/>
            <person name="Chu G."/>
            <person name="Chub I."/>
            <person name="Coleman H."/>
            <person name="Fuksenko T."/>
            <person name="Gestole M."/>
            <person name="Gregory M."/>
            <person name="Guan X."/>
            <person name="Gupta J."/>
            <person name="Gurson N."/>
            <person name="Han E."/>
            <person name="Han J."/>
            <person name="Hansen N."/>
            <person name="Hargrove A."/>
            <person name="Hines-Harris K."/>
            <person name="Ho S.-L."/>
            <person name="Hu P."/>
            <person name="Hunter G."/>
            <person name="Hurle B."/>
            <person name="Idol J.R."/>
            <person name="Johnson T."/>
            <person name="Knight E."/>
            <person name="Kwong P."/>
            <person name="Lee-Lin S.-Q."/>
            <person name="Legaspi R."/>
            <person name="Madden M."/>
            <person name="Maduro Q.L."/>
            <person name="Maduro V.B."/>
            <person name="Margulies E.H."/>
            <person name="Masiello C."/>
            <person name="Maskeri B."/>
            <person name="McDowell J."/>
            <person name="Merkulov G."/>
            <person name="Montemayor C."/>
            <person name="Mullikin J.C."/>
            <person name="Park M."/>
            <person name="Prasad A."/>
            <person name="Ramsahoye C."/>
            <person name="Reddix-Dugue N."/>
            <person name="Riebow N."/>
            <person name="Schandler K."/>
            <person name="Schueler M.G."/>
            <person name="Sison C."/>
            <person name="Smith L."/>
            <person name="Stantripop S."/>
            <person name="Thomas J.W."/>
            <person name="Thomas P.J."/>
            <person name="Tsipouri V."/>
            <person name="Young A."/>
            <person name="Green E.D."/>
        </authorList>
    </citation>
    <scope>NUCLEOTIDE SEQUENCE [LARGE SCALE GENOMIC DNA]</scope>
</reference>
<gene>
    <name type="primary">CDH2</name>
</gene>
<organism>
    <name type="scientific">Callithrix jacchus</name>
    <name type="common">White-tufted-ear marmoset</name>
    <dbReference type="NCBI Taxonomy" id="9483"/>
    <lineage>
        <taxon>Eukaryota</taxon>
        <taxon>Metazoa</taxon>
        <taxon>Chordata</taxon>
        <taxon>Craniata</taxon>
        <taxon>Vertebrata</taxon>
        <taxon>Euteleostomi</taxon>
        <taxon>Mammalia</taxon>
        <taxon>Eutheria</taxon>
        <taxon>Euarchontoglires</taxon>
        <taxon>Primates</taxon>
        <taxon>Haplorrhini</taxon>
        <taxon>Platyrrhini</taxon>
        <taxon>Cebidae</taxon>
        <taxon>Callitrichinae</taxon>
        <taxon>Callithrix</taxon>
        <taxon>Callithrix</taxon>
    </lineage>
</organism>
<accession>B0KW95</accession>
<dbReference type="EMBL" id="DP000568">
    <property type="protein sequence ID" value="ABY79118.1"/>
    <property type="molecule type" value="Genomic_DNA"/>
</dbReference>
<dbReference type="RefSeq" id="XP_002757187.3">
    <property type="nucleotide sequence ID" value="XM_002757141.5"/>
</dbReference>
<dbReference type="SMR" id="B0KW95"/>
<dbReference type="FunCoup" id="B0KW95">
    <property type="interactions" value="474"/>
</dbReference>
<dbReference type="STRING" id="9483.ENSCJAP00000070836"/>
<dbReference type="GlyCosmos" id="B0KW95">
    <property type="glycosylation" value="8 sites, No reported glycans"/>
</dbReference>
<dbReference type="Ensembl" id="ENSCJAT00000040785.5">
    <property type="protein sequence ID" value="ENSCJAP00000038607.5"/>
    <property type="gene ID" value="ENSCJAG00000020748.5"/>
</dbReference>
<dbReference type="GeneID" id="100411112"/>
<dbReference type="KEGG" id="cjc:100411112"/>
<dbReference type="CTD" id="1000"/>
<dbReference type="eggNOG" id="KOG3594">
    <property type="taxonomic scope" value="Eukaryota"/>
</dbReference>
<dbReference type="GeneTree" id="ENSGT00940000155981"/>
<dbReference type="InParanoid" id="B0KW95"/>
<dbReference type="OrthoDB" id="6079678at2759"/>
<dbReference type="TreeFam" id="TF316817"/>
<dbReference type="Proteomes" id="UP000008225">
    <property type="component" value="Chromosome 13"/>
</dbReference>
<dbReference type="GO" id="GO:0005912">
    <property type="term" value="C:adherens junction"/>
    <property type="evidence" value="ECO:0000250"/>
    <property type="project" value="UniProtKB"/>
</dbReference>
<dbReference type="GO" id="GO:0045177">
    <property type="term" value="C:apical part of cell"/>
    <property type="evidence" value="ECO:0007669"/>
    <property type="project" value="TreeGrafter"/>
</dbReference>
<dbReference type="GO" id="GO:0016342">
    <property type="term" value="C:catenin complex"/>
    <property type="evidence" value="ECO:0007669"/>
    <property type="project" value="TreeGrafter"/>
</dbReference>
<dbReference type="GO" id="GO:0030054">
    <property type="term" value="C:cell junction"/>
    <property type="evidence" value="ECO:0000250"/>
    <property type="project" value="UniProtKB"/>
</dbReference>
<dbReference type="GO" id="GO:0009986">
    <property type="term" value="C:cell surface"/>
    <property type="evidence" value="ECO:0000250"/>
    <property type="project" value="UniProtKB"/>
</dbReference>
<dbReference type="GO" id="GO:0005911">
    <property type="term" value="C:cell-cell junction"/>
    <property type="evidence" value="ECO:0000250"/>
    <property type="project" value="UniProtKB"/>
</dbReference>
<dbReference type="GO" id="GO:0005737">
    <property type="term" value="C:cytoplasm"/>
    <property type="evidence" value="ECO:0007669"/>
    <property type="project" value="TreeGrafter"/>
</dbReference>
<dbReference type="GO" id="GO:0030057">
    <property type="term" value="C:desmosome"/>
    <property type="evidence" value="ECO:0000250"/>
    <property type="project" value="UniProtKB"/>
</dbReference>
<dbReference type="GO" id="GO:0014704">
    <property type="term" value="C:intercalated disc"/>
    <property type="evidence" value="ECO:0000250"/>
    <property type="project" value="UniProtKB"/>
</dbReference>
<dbReference type="GO" id="GO:0030027">
    <property type="term" value="C:lamellipodium"/>
    <property type="evidence" value="ECO:0007669"/>
    <property type="project" value="TreeGrafter"/>
</dbReference>
<dbReference type="GO" id="GO:0043005">
    <property type="term" value="C:neuron projection"/>
    <property type="evidence" value="ECO:0007669"/>
    <property type="project" value="TreeGrafter"/>
</dbReference>
<dbReference type="GO" id="GO:0005886">
    <property type="term" value="C:plasma membrane"/>
    <property type="evidence" value="ECO:0000250"/>
    <property type="project" value="UniProtKB"/>
</dbReference>
<dbReference type="GO" id="GO:0014069">
    <property type="term" value="C:postsynaptic density"/>
    <property type="evidence" value="ECO:0007669"/>
    <property type="project" value="TreeGrafter"/>
</dbReference>
<dbReference type="GO" id="GO:0099634">
    <property type="term" value="C:postsynaptic specialization membrane"/>
    <property type="evidence" value="ECO:0007669"/>
    <property type="project" value="TreeGrafter"/>
</dbReference>
<dbReference type="GO" id="GO:0048787">
    <property type="term" value="C:presynaptic active zone membrane"/>
    <property type="evidence" value="ECO:0007669"/>
    <property type="project" value="TreeGrafter"/>
</dbReference>
<dbReference type="GO" id="GO:0042383">
    <property type="term" value="C:sarcolemma"/>
    <property type="evidence" value="ECO:0007669"/>
    <property type="project" value="UniProtKB-SubCell"/>
</dbReference>
<dbReference type="GO" id="GO:0008013">
    <property type="term" value="F:beta-catenin binding"/>
    <property type="evidence" value="ECO:0007669"/>
    <property type="project" value="TreeGrafter"/>
</dbReference>
<dbReference type="GO" id="GO:0045296">
    <property type="term" value="F:cadherin binding"/>
    <property type="evidence" value="ECO:0007669"/>
    <property type="project" value="TreeGrafter"/>
</dbReference>
<dbReference type="GO" id="GO:0005509">
    <property type="term" value="F:calcium ion binding"/>
    <property type="evidence" value="ECO:0000250"/>
    <property type="project" value="UniProtKB"/>
</dbReference>
<dbReference type="GO" id="GO:0034332">
    <property type="term" value="P:adherens junction organization"/>
    <property type="evidence" value="ECO:0007669"/>
    <property type="project" value="TreeGrafter"/>
</dbReference>
<dbReference type="GO" id="GO:0016339">
    <property type="term" value="P:calcium-dependent cell-cell adhesion via plasma membrane cell adhesion molecules"/>
    <property type="evidence" value="ECO:0007669"/>
    <property type="project" value="TreeGrafter"/>
</dbReference>
<dbReference type="GO" id="GO:0016477">
    <property type="term" value="P:cell migration"/>
    <property type="evidence" value="ECO:0007669"/>
    <property type="project" value="TreeGrafter"/>
</dbReference>
<dbReference type="GO" id="GO:0000902">
    <property type="term" value="P:cell morphogenesis"/>
    <property type="evidence" value="ECO:0007669"/>
    <property type="project" value="TreeGrafter"/>
</dbReference>
<dbReference type="GO" id="GO:0098609">
    <property type="term" value="P:cell-cell adhesion"/>
    <property type="evidence" value="ECO:0000250"/>
    <property type="project" value="UniProtKB"/>
</dbReference>
<dbReference type="GO" id="GO:0044331">
    <property type="term" value="P:cell-cell adhesion mediated by cadherin"/>
    <property type="evidence" value="ECO:0000250"/>
    <property type="project" value="UniProtKB"/>
</dbReference>
<dbReference type="GO" id="GO:0007043">
    <property type="term" value="P:cell-cell junction assembly"/>
    <property type="evidence" value="ECO:0000250"/>
    <property type="project" value="UniProtKB"/>
</dbReference>
<dbReference type="GO" id="GO:0010001">
    <property type="term" value="P:glial cell differentiation"/>
    <property type="evidence" value="ECO:0000250"/>
    <property type="project" value="UniProtKB"/>
</dbReference>
<dbReference type="GO" id="GO:0007156">
    <property type="term" value="P:homophilic cell adhesion via plasma membrane adhesion molecules"/>
    <property type="evidence" value="ECO:0007669"/>
    <property type="project" value="InterPro"/>
</dbReference>
<dbReference type="GO" id="GO:0014032">
    <property type="term" value="P:neural crest cell development"/>
    <property type="evidence" value="ECO:0000250"/>
    <property type="project" value="UniProtKB"/>
</dbReference>
<dbReference type="GO" id="GO:0097150">
    <property type="term" value="P:neuronal stem cell population maintenance"/>
    <property type="evidence" value="ECO:0000250"/>
    <property type="project" value="UniProtKB"/>
</dbReference>
<dbReference type="GO" id="GO:0007416">
    <property type="term" value="P:synapse assembly"/>
    <property type="evidence" value="ECO:0007669"/>
    <property type="project" value="TreeGrafter"/>
</dbReference>
<dbReference type="GO" id="GO:0097091">
    <property type="term" value="P:synaptic vesicle clustering"/>
    <property type="evidence" value="ECO:0000250"/>
    <property type="project" value="UniProtKB"/>
</dbReference>
<dbReference type="GO" id="GO:0003323">
    <property type="term" value="P:type B pancreatic cell development"/>
    <property type="evidence" value="ECO:0000250"/>
    <property type="project" value="UniProtKB"/>
</dbReference>
<dbReference type="CDD" id="cd11304">
    <property type="entry name" value="Cadherin_repeat"/>
    <property type="match status" value="3"/>
</dbReference>
<dbReference type="FunFam" id="2.60.40.60:FF:000011">
    <property type="entry name" value="Cadherin 1"/>
    <property type="match status" value="1"/>
</dbReference>
<dbReference type="FunFam" id="2.60.40.60:FF:000019">
    <property type="entry name" value="Cadherin 2"/>
    <property type="match status" value="1"/>
</dbReference>
<dbReference type="FunFam" id="2.60.40.60:FF:000022">
    <property type="entry name" value="Cadherin 2"/>
    <property type="match status" value="1"/>
</dbReference>
<dbReference type="FunFam" id="2.60.40.60:FF:000027">
    <property type="entry name" value="Cadherin 2"/>
    <property type="match status" value="1"/>
</dbReference>
<dbReference type="FunFam" id="2.60.40.60:FF:000045">
    <property type="entry name" value="Cadherin 2"/>
    <property type="match status" value="1"/>
</dbReference>
<dbReference type="FunFam" id="4.10.900.10:FF:000001">
    <property type="entry name" value="Cadherin 2"/>
    <property type="match status" value="1"/>
</dbReference>
<dbReference type="FunFam" id="2.60.40.60:FF:000139">
    <property type="entry name" value="Cadherin-2 preproprotein"/>
    <property type="match status" value="1"/>
</dbReference>
<dbReference type="Gene3D" id="2.60.40.60">
    <property type="entry name" value="Cadherins"/>
    <property type="match status" value="6"/>
</dbReference>
<dbReference type="Gene3D" id="4.10.900.10">
    <property type="entry name" value="TCF3-CBD (Catenin binding domain)"/>
    <property type="match status" value="1"/>
</dbReference>
<dbReference type="InterPro" id="IPR039808">
    <property type="entry name" value="Cadherin"/>
</dbReference>
<dbReference type="InterPro" id="IPR002126">
    <property type="entry name" value="Cadherin-like_dom"/>
</dbReference>
<dbReference type="InterPro" id="IPR015919">
    <property type="entry name" value="Cadherin-like_sf"/>
</dbReference>
<dbReference type="InterPro" id="IPR020894">
    <property type="entry name" value="Cadherin_CS"/>
</dbReference>
<dbReference type="InterPro" id="IPR014868">
    <property type="entry name" value="Cadherin_pro_dom"/>
</dbReference>
<dbReference type="InterPro" id="IPR000233">
    <property type="entry name" value="Cadherin_Y-type_LIR"/>
</dbReference>
<dbReference type="InterPro" id="IPR027397">
    <property type="entry name" value="Catenin-bd_sf"/>
</dbReference>
<dbReference type="PANTHER" id="PTHR24027:SF79">
    <property type="entry name" value="CADHERIN-2"/>
    <property type="match status" value="1"/>
</dbReference>
<dbReference type="PANTHER" id="PTHR24027">
    <property type="entry name" value="CADHERIN-23"/>
    <property type="match status" value="1"/>
</dbReference>
<dbReference type="Pfam" id="PF01049">
    <property type="entry name" value="CADH_Y-type_LIR"/>
    <property type="match status" value="1"/>
</dbReference>
<dbReference type="Pfam" id="PF00028">
    <property type="entry name" value="Cadherin"/>
    <property type="match status" value="5"/>
</dbReference>
<dbReference type="Pfam" id="PF08758">
    <property type="entry name" value="Cadherin_pro"/>
    <property type="match status" value="1"/>
</dbReference>
<dbReference type="PRINTS" id="PR00205">
    <property type="entry name" value="CADHERIN"/>
</dbReference>
<dbReference type="PRINTS" id="PR01820">
    <property type="entry name" value="DESMOCOLLIN"/>
</dbReference>
<dbReference type="SMART" id="SM00112">
    <property type="entry name" value="CA"/>
    <property type="match status" value="5"/>
</dbReference>
<dbReference type="SMART" id="SM01055">
    <property type="entry name" value="Cadherin_pro"/>
    <property type="match status" value="1"/>
</dbReference>
<dbReference type="SUPFAM" id="SSF49313">
    <property type="entry name" value="Cadherin-like"/>
    <property type="match status" value="6"/>
</dbReference>
<dbReference type="PROSITE" id="PS00232">
    <property type="entry name" value="CADHERIN_1"/>
    <property type="match status" value="3"/>
</dbReference>
<dbReference type="PROSITE" id="PS50268">
    <property type="entry name" value="CADHERIN_2"/>
    <property type="match status" value="5"/>
</dbReference>
<comment type="function">
    <text evidence="2 3">Calcium-dependent cell adhesion protein; preferentially mediates homotypic cell-cell adhesion by dimerization with a CDH2 chain from another cell. Cadherins may thus contribute to the sorting of heterogeneous cell types. Acts as a regulator of neural stem cells quiescence by mediating anchorage of neural stem cells to ependymocytes in the adult subependymal zone: upon cleavage by MMP24, CDH2-mediated anchorage is affected, leading to modulate neural stem cell quiescence. Plays a role in cell-to-cell junction formation between pancreatic beta cells and neural crest stem (NCS) cells, promoting the formation of processes by NCS cells (By similarity). Required for proper neurite branching. Required for pre- and postsynaptic organization (By similarity). CDH2 may be involved in neuronal recognition mechanism. In hippocampal neurons, may regulate dendritic spine density.</text>
</comment>
<comment type="subunit">
    <text evidence="3 4 5">Homodimer (via extracellular region). Can also form heterodimers with other cadherins (via extracellular region). Dimerization occurs in trans, i.e. with a cadherin chain from another cell (By similarity). Interacts with CDCP1 (By similarity). Interacts with PCDH8; this complex may also include TAOK2 (By similarity). The interaction with PCDH8 may lead to internalization through TAOK2/p38 MAPK pathway (By similarity). Identified in a complex containing FGFR4, NCAM1, CDH2, PLCG1, FRS2, SRC, SHC1, GAP43 and CTTN. May interact with OBSCN (via protein kinase domain 2) (By similarity). Interacts with FBXO45 (By similarity).</text>
</comment>
<comment type="subcellular location">
    <subcellularLocation>
        <location evidence="3">Cell membrane</location>
        <topology evidence="6">Single-pass type I membrane protein</topology>
    </subcellularLocation>
    <subcellularLocation>
        <location evidence="3">Cell membrane</location>
        <location evidence="3">Sarcolemma</location>
    </subcellularLocation>
    <subcellularLocation>
        <location evidence="4">Cell junction</location>
    </subcellularLocation>
    <subcellularLocation>
        <location evidence="3">Cell surface</location>
    </subcellularLocation>
    <subcellularLocation>
        <location evidence="3">Cell junction</location>
        <location evidence="3">Desmosome</location>
    </subcellularLocation>
    <subcellularLocation>
        <location evidence="3">Cell junction</location>
        <location evidence="3">Adherens junction</location>
    </subcellularLocation>
    <text evidence="3">Colocalizes with TMEM65 at the intercalated disk in cardiomyocytes (By similarity). Colocalizes with OBSCN at the intercalated disk and sarcolemma in cardiomyocytes (By similarity).</text>
</comment>
<comment type="domain">
    <text evidence="3">Three calcium ions are usually bound at the interface of each cadherin domain and rigidify the connections, imparting a strong curvature to the full-length ectodomain. Calcium-binding sites are occupied sequentially in the order of site 3, then site 2 and site 1.</text>
</comment>
<comment type="PTM">
    <text evidence="3">Cleaved by MMP24. Ectodomain cleavage leads to the generation of a soluble 90 kDa N-terminal soluble fragment and a 45 kDa membrane-bound C-terminal fragment 1 (CTF1), which is further cleaved by gamma-secretase into a 35 kDa (By similarity). Cleavage in neural stem cells by MMP24 affects CDH2-mediated anchorage of neural stem cells to ependymocytes in the adult subependymal zone, leading to modulate neural stem cell quiescence (By similarity).</text>
</comment>
<feature type="signal peptide" evidence="6">
    <location>
        <begin position="1"/>
        <end position="25"/>
    </location>
</feature>
<feature type="propeptide" id="PRO_0000375873" evidence="1">
    <location>
        <begin position="26"/>
        <end position="159"/>
    </location>
</feature>
<feature type="chain" id="PRO_0000375874" description="Cadherin-2">
    <location>
        <begin position="160"/>
        <end position="906"/>
    </location>
</feature>
<feature type="topological domain" description="Extracellular" evidence="6">
    <location>
        <begin position="160"/>
        <end position="724"/>
    </location>
</feature>
<feature type="transmembrane region" description="Helical" evidence="6">
    <location>
        <begin position="725"/>
        <end position="745"/>
    </location>
</feature>
<feature type="topological domain" description="Cytoplasmic" evidence="6">
    <location>
        <begin position="746"/>
        <end position="906"/>
    </location>
</feature>
<feature type="domain" description="Cadherin 1" evidence="7">
    <location>
        <begin position="160"/>
        <end position="267"/>
    </location>
</feature>
<feature type="domain" description="Cadherin 2" evidence="7">
    <location>
        <begin position="268"/>
        <end position="382"/>
    </location>
</feature>
<feature type="domain" description="Cadherin 3" evidence="7">
    <location>
        <begin position="383"/>
        <end position="497"/>
    </location>
</feature>
<feature type="domain" description="Cadherin 4" evidence="7">
    <location>
        <begin position="498"/>
        <end position="603"/>
    </location>
</feature>
<feature type="domain" description="Cadherin 5" evidence="7">
    <location>
        <begin position="604"/>
        <end position="714"/>
    </location>
</feature>
<feature type="region of interest" description="Disordered" evidence="8">
    <location>
        <begin position="863"/>
        <end position="884"/>
    </location>
</feature>
<feature type="compositionally biased region" description="Low complexity" evidence="8">
    <location>
        <begin position="863"/>
        <end position="880"/>
    </location>
</feature>
<feature type="binding site" evidence="3">
    <location>
        <position position="170"/>
    </location>
    <ligand>
        <name>Ca(2+)</name>
        <dbReference type="ChEBI" id="CHEBI:29108"/>
        <label>1</label>
    </ligand>
</feature>
<feature type="binding site" evidence="3">
    <location>
        <position position="170"/>
    </location>
    <ligand>
        <name>Ca(2+)</name>
        <dbReference type="ChEBI" id="CHEBI:29108"/>
        <label>2</label>
    </ligand>
</feature>
<feature type="binding site" evidence="3">
    <location>
        <position position="226"/>
    </location>
    <ligand>
        <name>Ca(2+)</name>
        <dbReference type="ChEBI" id="CHEBI:29108"/>
        <label>1</label>
    </ligand>
</feature>
<feature type="binding site" evidence="3">
    <location>
        <position position="228"/>
    </location>
    <ligand>
        <name>Ca(2+)</name>
        <dbReference type="ChEBI" id="CHEBI:29108"/>
        <label>1</label>
    </ligand>
</feature>
<feature type="binding site" evidence="3">
    <location>
        <position position="228"/>
    </location>
    <ligand>
        <name>Ca(2+)</name>
        <dbReference type="ChEBI" id="CHEBI:29108"/>
        <label>2</label>
    </ligand>
</feature>
<feature type="binding site" evidence="3">
    <location>
        <position position="259"/>
    </location>
    <ligand>
        <name>Ca(2+)</name>
        <dbReference type="ChEBI" id="CHEBI:29108"/>
        <label>2</label>
    </ligand>
</feature>
<feature type="binding site" evidence="3">
    <location>
        <position position="260"/>
    </location>
    <ligand>
        <name>Ca(2+)</name>
        <dbReference type="ChEBI" id="CHEBI:29108"/>
        <label>2</label>
    </ligand>
</feature>
<feature type="binding site" evidence="3">
    <location>
        <position position="261"/>
    </location>
    <ligand>
        <name>Ca(2+)</name>
        <dbReference type="ChEBI" id="CHEBI:29108"/>
        <label>3</label>
    </ligand>
</feature>
<feature type="binding site" evidence="3">
    <location>
        <position position="262"/>
    </location>
    <ligand>
        <name>Ca(2+)</name>
        <dbReference type="ChEBI" id="CHEBI:29108"/>
        <label>1</label>
    </ligand>
</feature>
<feature type="binding site" evidence="3">
    <location>
        <position position="262"/>
    </location>
    <ligand>
        <name>Ca(2+)</name>
        <dbReference type="ChEBI" id="CHEBI:29108"/>
        <label>2</label>
    </ligand>
</feature>
<feature type="binding site" evidence="3">
    <location>
        <position position="263"/>
    </location>
    <ligand>
        <name>Ca(2+)</name>
        <dbReference type="ChEBI" id="CHEBI:29108"/>
        <label>3</label>
    </ligand>
</feature>
<feature type="binding site" evidence="3">
    <location>
        <position position="293"/>
    </location>
    <ligand>
        <name>Ca(2+)</name>
        <dbReference type="ChEBI" id="CHEBI:29108"/>
        <label>3</label>
    </ligand>
</feature>
<feature type="binding site" evidence="3">
    <location>
        <position position="295"/>
    </location>
    <ligand>
        <name>Ca(2+)</name>
        <dbReference type="ChEBI" id="CHEBI:29108"/>
        <label>2</label>
    </ligand>
</feature>
<feature type="binding site" evidence="3">
    <location>
        <position position="301"/>
    </location>
    <ligand>
        <name>Ca(2+)</name>
        <dbReference type="ChEBI" id="CHEBI:29108"/>
        <label>3</label>
    </ligand>
</feature>
<feature type="binding site" evidence="3">
    <location>
        <position position="353"/>
    </location>
    <ligand>
        <name>Ca(2+)</name>
        <dbReference type="ChEBI" id="CHEBI:29108"/>
        <label>3</label>
    </ligand>
</feature>
<feature type="modified residue" description="Phosphoserine" evidence="4">
    <location>
        <position position="96"/>
    </location>
</feature>
<feature type="modified residue" description="Phosphoserine" evidence="4">
    <location>
        <position position="135"/>
    </location>
</feature>
<feature type="glycosylation site" description="N-linked (GlcNAc...) asparagine" evidence="6">
    <location>
        <position position="190"/>
    </location>
</feature>
<feature type="glycosylation site" description="N-linked (GlcNAc...) asparagine" evidence="6">
    <location>
        <position position="273"/>
    </location>
</feature>
<feature type="glycosylation site" description="N-linked (GlcNAc...) asparagine" evidence="6">
    <location>
        <position position="325"/>
    </location>
</feature>
<feature type="glycosylation site" description="N-linked (GlcNAc...) asparagine" evidence="6">
    <location>
        <position position="402"/>
    </location>
</feature>
<feature type="glycosylation site" description="N-linked (GlcNAc...) asparagine" evidence="6">
    <location>
        <position position="572"/>
    </location>
</feature>
<feature type="glycosylation site" description="N-linked (GlcNAc...) asparagine" evidence="6">
    <location>
        <position position="622"/>
    </location>
</feature>
<feature type="glycosylation site" description="N-linked (GlcNAc...) asparagine" evidence="6">
    <location>
        <position position="651"/>
    </location>
</feature>
<feature type="glycosylation site" description="N-linked (GlcNAc...) asparagine" evidence="6">
    <location>
        <position position="692"/>
    </location>
</feature>
<evidence type="ECO:0000250" key="1"/>
<evidence type="ECO:0000250" key="2">
    <source>
        <dbReference type="UniProtKB" id="P10288"/>
    </source>
</evidence>
<evidence type="ECO:0000250" key="3">
    <source>
        <dbReference type="UniProtKB" id="P15116"/>
    </source>
</evidence>
<evidence type="ECO:0000250" key="4">
    <source>
        <dbReference type="UniProtKB" id="P19022"/>
    </source>
</evidence>
<evidence type="ECO:0000250" key="5">
    <source>
        <dbReference type="UniProtKB" id="Q9Z1Y3"/>
    </source>
</evidence>
<evidence type="ECO:0000255" key="6"/>
<evidence type="ECO:0000255" key="7">
    <source>
        <dbReference type="PROSITE-ProRule" id="PRU00043"/>
    </source>
</evidence>
<evidence type="ECO:0000256" key="8">
    <source>
        <dbReference type="SAM" id="MobiDB-lite"/>
    </source>
</evidence>
<keyword id="KW-0106">Calcium</keyword>
<keyword id="KW-0130">Cell adhesion</keyword>
<keyword id="KW-0965">Cell junction</keyword>
<keyword id="KW-1003">Cell membrane</keyword>
<keyword id="KW-0165">Cleavage on pair of basic residues</keyword>
<keyword id="KW-0325">Glycoprotein</keyword>
<keyword id="KW-0472">Membrane</keyword>
<keyword id="KW-0479">Metal-binding</keyword>
<keyword id="KW-0597">Phosphoprotein</keyword>
<keyword id="KW-1185">Reference proteome</keyword>
<keyword id="KW-0677">Repeat</keyword>
<keyword id="KW-0732">Signal</keyword>
<keyword id="KW-0812">Transmembrane</keyword>
<keyword id="KW-1133">Transmembrane helix</keyword>
<proteinExistence type="inferred from homology"/>
<protein>
    <recommendedName>
        <fullName>Cadherin-2</fullName>
    </recommendedName>
    <alternativeName>
        <fullName>Neural cadherin</fullName>
        <shortName>N-cadherin</shortName>
    </alternativeName>
    <cdAntigenName>CD325</cdAntigenName>
</protein>
<sequence>MCRIAGAPRTLLPLLAALLQASVEASGEIALCKTGFPEDVYSAVLSKDVHEGQPLLNVKFSNCNGKRKVQYESSEPADFKVDEDGMVYAVRSFPLSSEHAKFLIYAQDKETQEKWQVAVKLSLKPTLPEESVKESTEVEEIVFPRQLGKHSGHLQRQKRDWVIPPINLPENSRGPFPQELVRIRSDRDKNLSLRYSVTGPGADQPPTGIFIINPISGQLSVTKPLDREQIARFHLRAHAVDINGNQVENPIDIVINVIDMNDNRPEFLHQVWNGTVPEGSKPGTYVMTVTAIDADDPNALNGMLRYRILSQAPSTPSPNMFTINNETGDIITVAAGLDREKVQQYTLIIQATDMEGNPTYGLSNTATAIITVTDVNDNPPEFTAMTFYGEVPENRVDVIVANLTVTDKDQPHTPAWNAVYRISGGDPTGRFAIQTDPNSNDGLVTVVKPIDFETNRMFVLTVAAENQVPLAKGIQHPPQSTATVSVTVIDVNENPYFAPNPKIIRQEEGLHAGTMLTTFTAQDPDRYMQQNIRYTKLSDPANWLKIDPVNGQITTIAILDRESPNVKNNIYNATFLASDNGIPPMSGTGTLQIYLLDINDNAPQVLPQEAETCETPDPNSINITALDYDIDPNAGPFAFDLPLSPVNIKRNWTITRLNGDFAQLNLKIKFLEAGIYEVPIIITDSGNPPKSNISILRVKVCQCDSNGDCTDVDRIVGAGLGTGAIIAILLCIIILLILVLMFVVWMKRRDKERQAKQLLIDPEDDVRDNILKYDEEGGGEEDQDYDLSQLQQPDTVEPDAIKPVGIRRMDERPIHAEPQYPVRSAAPHPGDIGDFINEGLKAADNDPTAPPYDSLLVFDYEGSGSTAGSLSSLNSSSSGGEQDYDYLNDWGPRFKKLADMYGGGDD</sequence>
<name>CADH2_CALJA</name>